<comment type="function">
    <text evidence="2">Component of the cytochrome c oxidase, the last enzyme in the mitochondrial electron transport chain which drives oxidative phosphorylation. The respiratory chain contains 3 multisubunit complexes succinate dehydrogenase (complex II, CII), ubiquinol-cytochrome c oxidoreductase (cytochrome b-c1 complex, complex III, CIII) and cytochrome c oxidase (complex IV, CIV), that cooperate to transfer electrons derived from NADH and succinate to molecular oxygen, creating an electrochemical gradient over the inner membrane that drives transmembrane transport and the ATP synthase. Cytochrome c oxidase is the component of the respiratory chain that catalyzes the reduction of oxygen to water. Electrons originating from reduced cytochrome c in the intermembrane space (IMS) are transferred via the dinuclear copper A center (CU(A)) of subunit 2 and heme A of subunit 1 to the active site in subunit 1, a binuclear center (BNC) formed by heme A3 and copper B (CU(B)). The BNC reduces molecular oxygen to 2 water molecules using 4 electrons from cytochrome c in the IMS and 4 protons from the mitochondrial matrix.</text>
</comment>
<comment type="catalytic activity">
    <reaction evidence="2">
        <text>4 Fe(II)-[cytochrome c] + O2 + 8 H(+)(in) = 4 Fe(III)-[cytochrome c] + 2 H2O + 4 H(+)(out)</text>
        <dbReference type="Rhea" id="RHEA:11436"/>
        <dbReference type="Rhea" id="RHEA-COMP:10350"/>
        <dbReference type="Rhea" id="RHEA-COMP:14399"/>
        <dbReference type="ChEBI" id="CHEBI:15377"/>
        <dbReference type="ChEBI" id="CHEBI:15378"/>
        <dbReference type="ChEBI" id="CHEBI:15379"/>
        <dbReference type="ChEBI" id="CHEBI:29033"/>
        <dbReference type="ChEBI" id="CHEBI:29034"/>
        <dbReference type="EC" id="7.1.1.9"/>
    </reaction>
    <physiologicalReaction direction="left-to-right" evidence="2">
        <dbReference type="Rhea" id="RHEA:11437"/>
    </physiologicalReaction>
</comment>
<comment type="cofactor">
    <cofactor evidence="3">
        <name>Cu cation</name>
        <dbReference type="ChEBI" id="CHEBI:23378"/>
    </cofactor>
    <text evidence="3">Binds a dinuclear copper A center per subunit.</text>
</comment>
<comment type="subunit">
    <text evidence="1 3">Component of the cytochrome c oxidase (complex IV, CIV), a multisubunit enzyme composed of 14 subunits. The complex is composed of a catalytic core of 3 subunits MT-CO1, MT-CO2 and MT-CO3, encoded in the mitochondrial DNA, and 11 supernumerary subunits COX4I, COX5A, COX5B, COX6A, COX6B, COX6C, COX7A, COX7B, COX7C, COX8 and NDUFA4, which are encoded in the nuclear genome. The complex exists as a monomer or a dimer and forms supercomplexes (SCs) in the inner mitochondrial membrane with NADH-ubiquinone oxidoreductase (complex I, CI) and ubiquinol-cytochrome c oxidoreductase (cytochrome b-c1 complex, complex III, CIII), resulting in different assemblies (supercomplex SCI(1)III(2)IV(1) and megacomplex MCI(2)III(2)IV(2)) (By similarity). Found in a complex with TMEM177, COA6, COX18, COX20, SCO1 and SCO2. Interacts with TMEM177 in a COX20-dependent manner. Interacts with COX20. Interacts with COX16 (By similarity).</text>
</comment>
<comment type="subcellular location">
    <subcellularLocation>
        <location evidence="3">Mitochondrion inner membrane</location>
        <topology evidence="3">Multi-pass membrane protein</topology>
    </subcellularLocation>
</comment>
<comment type="similarity">
    <text evidence="4">Belongs to the cytochrome c oxidase subunit 2 family.</text>
</comment>
<keyword id="KW-0186">Copper</keyword>
<keyword id="KW-0249">Electron transport</keyword>
<keyword id="KW-0460">Magnesium</keyword>
<keyword id="KW-0472">Membrane</keyword>
<keyword id="KW-0479">Metal-binding</keyword>
<keyword id="KW-0496">Mitochondrion</keyword>
<keyword id="KW-0999">Mitochondrion inner membrane</keyword>
<keyword id="KW-0679">Respiratory chain</keyword>
<keyword id="KW-1278">Translocase</keyword>
<keyword id="KW-0812">Transmembrane</keyword>
<keyword id="KW-1133">Transmembrane helix</keyword>
<keyword id="KW-0813">Transport</keyword>
<feature type="chain" id="PRO_0000254931" description="Cytochrome c oxidase subunit 2">
    <location>
        <begin position="1"/>
        <end position="227"/>
    </location>
</feature>
<feature type="topological domain" description="Mitochondrial intermembrane" evidence="3">
    <location>
        <begin position="1"/>
        <end position="14"/>
    </location>
</feature>
<feature type="transmembrane region" description="Helical; Name=I" evidence="3">
    <location>
        <begin position="15"/>
        <end position="45"/>
    </location>
</feature>
<feature type="topological domain" description="Mitochondrial matrix" evidence="3">
    <location>
        <begin position="46"/>
        <end position="59"/>
    </location>
</feature>
<feature type="transmembrane region" description="Helical; Name=II" evidence="3">
    <location>
        <begin position="60"/>
        <end position="87"/>
    </location>
</feature>
<feature type="topological domain" description="Mitochondrial intermembrane" evidence="3">
    <location>
        <begin position="88"/>
        <end position="227"/>
    </location>
</feature>
<feature type="binding site" evidence="3">
    <location>
        <position position="161"/>
    </location>
    <ligand>
        <name>Cu cation</name>
        <dbReference type="ChEBI" id="CHEBI:23378"/>
        <label>A1</label>
    </ligand>
</feature>
<feature type="binding site" evidence="3">
    <location>
        <position position="196"/>
    </location>
    <ligand>
        <name>Cu cation</name>
        <dbReference type="ChEBI" id="CHEBI:23378"/>
        <label>A1</label>
    </ligand>
</feature>
<feature type="binding site" evidence="3">
    <location>
        <position position="196"/>
    </location>
    <ligand>
        <name>Cu cation</name>
        <dbReference type="ChEBI" id="CHEBI:23378"/>
        <label>A2</label>
    </ligand>
</feature>
<feature type="binding site" evidence="3">
    <location>
        <position position="198"/>
    </location>
    <ligand>
        <name>Cu cation</name>
        <dbReference type="ChEBI" id="CHEBI:23378"/>
        <label>A2</label>
    </ligand>
</feature>
<feature type="binding site" evidence="3">
    <location>
        <position position="198"/>
    </location>
    <ligand>
        <name>Mg(2+)</name>
        <dbReference type="ChEBI" id="CHEBI:18420"/>
        <note>ligand shared with MT-CO1</note>
    </ligand>
</feature>
<feature type="binding site" evidence="3">
    <location>
        <position position="200"/>
    </location>
    <ligand>
        <name>Cu cation</name>
        <dbReference type="ChEBI" id="CHEBI:23378"/>
        <label>A1</label>
    </ligand>
</feature>
<feature type="binding site" evidence="3">
    <location>
        <position position="200"/>
    </location>
    <ligand>
        <name>Cu cation</name>
        <dbReference type="ChEBI" id="CHEBI:23378"/>
        <label>A2</label>
    </ligand>
</feature>
<feature type="binding site" evidence="3">
    <location>
        <position position="204"/>
    </location>
    <ligand>
        <name>Cu cation</name>
        <dbReference type="ChEBI" id="CHEBI:23378"/>
        <label>A2</label>
    </ligand>
</feature>
<feature type="binding site" evidence="3">
    <location>
        <position position="207"/>
    </location>
    <ligand>
        <name>Cu cation</name>
        <dbReference type="ChEBI" id="CHEBI:23378"/>
        <label>A1</label>
    </ligand>
</feature>
<evidence type="ECO:0000250" key="1">
    <source>
        <dbReference type="UniProtKB" id="P00403"/>
    </source>
</evidence>
<evidence type="ECO:0000250" key="2">
    <source>
        <dbReference type="UniProtKB" id="P00410"/>
    </source>
</evidence>
<evidence type="ECO:0000250" key="3">
    <source>
        <dbReference type="UniProtKB" id="P68530"/>
    </source>
</evidence>
<evidence type="ECO:0000305" key="4"/>
<name>COX2_MAXBA</name>
<geneLocation type="mitochondrion"/>
<protein>
    <recommendedName>
        <fullName>Cytochrome c oxidase subunit 2</fullName>
        <ecNumber>7.1.1.9</ecNumber>
    </recommendedName>
    <alternativeName>
        <fullName>Cytochrome c oxidase polypeptide II</fullName>
    </alternativeName>
</protein>
<sequence>MAYPFQLGLQDATSPIMEELMNFHDHTLMIVFLISSLVLYIISLMLTTKLTHTSTMDAQEVETIWTILPAVILILIALPSLRILYMMDEINNPVLTVKTMGHQWYWSYEYTDYEDLCFDSYMIPTNDLKPGELRLLEVDNRVVLPMELPIRMLISSEDVLHSWAVPSLGLKTDAIPGRLNQATVTSNRPGLYYGQCSEICGSNHSFMPIVLEMVPLKNFENWSASMI</sequence>
<accession>Q38RZ2</accession>
<reference key="1">
    <citation type="journal article" date="2005" name="Mol. Phylogenet. Evol.">
        <title>Multigene phylogeny of the Old World mice, Murinae, reveals distinct geographic lineages and the declining utility of mitochondrial genes compared to nuclear genes.</title>
        <authorList>
            <person name="Steppan S.J."/>
            <person name="Adkins R.M."/>
            <person name="Spinks P.Q."/>
            <person name="Hale C."/>
        </authorList>
    </citation>
    <scope>NUCLEOTIDE SEQUENCE [GENOMIC DNA]</scope>
</reference>
<proteinExistence type="inferred from homology"/>
<gene>
    <name type="primary">MT-CO2</name>
    <name type="synonym">COII</name>
    <name type="synonym">COX2</name>
    <name type="synonym">COXII</name>
    <name type="synonym">MTCO2</name>
</gene>
<organism>
    <name type="scientific">Maxomys bartelsii</name>
    <name type="common">Bartels's Javan maxomys</name>
    <name type="synonym">Bartels's spiny rat</name>
    <dbReference type="NCBI Taxonomy" id="332665"/>
    <lineage>
        <taxon>Eukaryota</taxon>
        <taxon>Metazoa</taxon>
        <taxon>Chordata</taxon>
        <taxon>Craniata</taxon>
        <taxon>Vertebrata</taxon>
        <taxon>Euteleostomi</taxon>
        <taxon>Mammalia</taxon>
        <taxon>Eutheria</taxon>
        <taxon>Euarchontoglires</taxon>
        <taxon>Glires</taxon>
        <taxon>Rodentia</taxon>
        <taxon>Myomorpha</taxon>
        <taxon>Muroidea</taxon>
        <taxon>Muridae</taxon>
        <taxon>Murinae</taxon>
        <taxon>Maxomys</taxon>
    </lineage>
</organism>
<dbReference type="EC" id="7.1.1.9"/>
<dbReference type="EMBL" id="DQ019106">
    <property type="protein sequence ID" value="ABA28408.1"/>
    <property type="molecule type" value="Genomic_DNA"/>
</dbReference>
<dbReference type="SMR" id="Q38RZ2"/>
<dbReference type="GO" id="GO:0005743">
    <property type="term" value="C:mitochondrial inner membrane"/>
    <property type="evidence" value="ECO:0007669"/>
    <property type="project" value="UniProtKB-SubCell"/>
</dbReference>
<dbReference type="GO" id="GO:0045277">
    <property type="term" value="C:respiratory chain complex IV"/>
    <property type="evidence" value="ECO:0000250"/>
    <property type="project" value="UniProtKB"/>
</dbReference>
<dbReference type="GO" id="GO:0005507">
    <property type="term" value="F:copper ion binding"/>
    <property type="evidence" value="ECO:0007669"/>
    <property type="project" value="InterPro"/>
</dbReference>
<dbReference type="GO" id="GO:0004129">
    <property type="term" value="F:cytochrome-c oxidase activity"/>
    <property type="evidence" value="ECO:0007669"/>
    <property type="project" value="UniProtKB-EC"/>
</dbReference>
<dbReference type="GO" id="GO:0042773">
    <property type="term" value="P:ATP synthesis coupled electron transport"/>
    <property type="evidence" value="ECO:0007669"/>
    <property type="project" value="TreeGrafter"/>
</dbReference>
<dbReference type="CDD" id="cd13912">
    <property type="entry name" value="CcO_II_C"/>
    <property type="match status" value="1"/>
</dbReference>
<dbReference type="FunFam" id="1.10.287.90:FF:000001">
    <property type="entry name" value="Cytochrome c oxidase subunit 2"/>
    <property type="match status" value="1"/>
</dbReference>
<dbReference type="FunFam" id="2.60.40.420:FF:000001">
    <property type="entry name" value="Cytochrome c oxidase subunit 2"/>
    <property type="match status" value="1"/>
</dbReference>
<dbReference type="Gene3D" id="1.10.287.90">
    <property type="match status" value="1"/>
</dbReference>
<dbReference type="Gene3D" id="2.60.40.420">
    <property type="entry name" value="Cupredoxins - blue copper proteins"/>
    <property type="match status" value="1"/>
</dbReference>
<dbReference type="InterPro" id="IPR045187">
    <property type="entry name" value="CcO_II"/>
</dbReference>
<dbReference type="InterPro" id="IPR002429">
    <property type="entry name" value="CcO_II-like_C"/>
</dbReference>
<dbReference type="InterPro" id="IPR034210">
    <property type="entry name" value="CcO_II_C"/>
</dbReference>
<dbReference type="InterPro" id="IPR001505">
    <property type="entry name" value="Copper_CuA"/>
</dbReference>
<dbReference type="InterPro" id="IPR008972">
    <property type="entry name" value="Cupredoxin"/>
</dbReference>
<dbReference type="InterPro" id="IPR014222">
    <property type="entry name" value="Cyt_c_oxidase_su2"/>
</dbReference>
<dbReference type="InterPro" id="IPR011759">
    <property type="entry name" value="Cyt_c_oxidase_su2_TM_dom"/>
</dbReference>
<dbReference type="InterPro" id="IPR036257">
    <property type="entry name" value="Cyt_c_oxidase_su2_TM_sf"/>
</dbReference>
<dbReference type="NCBIfam" id="TIGR02866">
    <property type="entry name" value="CoxB"/>
    <property type="match status" value="1"/>
</dbReference>
<dbReference type="PANTHER" id="PTHR22888:SF9">
    <property type="entry name" value="CYTOCHROME C OXIDASE SUBUNIT 2"/>
    <property type="match status" value="1"/>
</dbReference>
<dbReference type="PANTHER" id="PTHR22888">
    <property type="entry name" value="CYTOCHROME C OXIDASE, SUBUNIT II"/>
    <property type="match status" value="1"/>
</dbReference>
<dbReference type="Pfam" id="PF00116">
    <property type="entry name" value="COX2"/>
    <property type="match status" value="1"/>
</dbReference>
<dbReference type="Pfam" id="PF02790">
    <property type="entry name" value="COX2_TM"/>
    <property type="match status" value="1"/>
</dbReference>
<dbReference type="PRINTS" id="PR01166">
    <property type="entry name" value="CYCOXIDASEII"/>
</dbReference>
<dbReference type="SUPFAM" id="SSF49503">
    <property type="entry name" value="Cupredoxins"/>
    <property type="match status" value="1"/>
</dbReference>
<dbReference type="SUPFAM" id="SSF81464">
    <property type="entry name" value="Cytochrome c oxidase subunit II-like, transmembrane region"/>
    <property type="match status" value="1"/>
</dbReference>
<dbReference type="PROSITE" id="PS00078">
    <property type="entry name" value="COX2"/>
    <property type="match status" value="1"/>
</dbReference>
<dbReference type="PROSITE" id="PS50857">
    <property type="entry name" value="COX2_CUA"/>
    <property type="match status" value="1"/>
</dbReference>
<dbReference type="PROSITE" id="PS50999">
    <property type="entry name" value="COX2_TM"/>
    <property type="match status" value="1"/>
</dbReference>